<feature type="chain" id="PRO_0000053052" description="Hemoglobin subunit beta-1">
    <location>
        <begin position="1"/>
        <end position="146"/>
    </location>
</feature>
<feature type="domain" description="Globin" evidence="4">
    <location>
        <begin position="2"/>
        <end position="146"/>
    </location>
</feature>
<feature type="binding site" description="distal binding residue">
    <location>
        <position position="63"/>
    </location>
    <ligand>
        <name>heme b</name>
        <dbReference type="ChEBI" id="CHEBI:60344"/>
    </ligand>
    <ligandPart>
        <name>Fe</name>
        <dbReference type="ChEBI" id="CHEBI:18248"/>
    </ligandPart>
</feature>
<feature type="binding site" description="proximal binding residue">
    <location>
        <position position="92"/>
    </location>
    <ligand>
        <name>heme b</name>
        <dbReference type="ChEBI" id="CHEBI:60344"/>
    </ligand>
    <ligandPart>
        <name>Fe</name>
        <dbReference type="ChEBI" id="CHEBI:18248"/>
    </ligandPart>
</feature>
<feature type="modified residue" description="N-acetylserine" evidence="5">
    <location>
        <position position="1"/>
    </location>
</feature>
<feature type="modified residue" description="N6-succinyllysine" evidence="1">
    <location>
        <position position="17"/>
    </location>
</feature>
<feature type="modified residue" description="Phosphoserine" evidence="3">
    <location>
        <position position="44"/>
    </location>
</feature>
<feature type="modified residue" description="Phosphoserine" evidence="3">
    <location>
        <position position="50"/>
    </location>
</feature>
<feature type="modified residue" description="N6-succinyllysine" evidence="2">
    <location>
        <position position="59"/>
    </location>
</feature>
<feature type="modified residue" description="Asymmetric dimethylarginine" evidence="2">
    <location>
        <position position="104"/>
    </location>
</feature>
<gene>
    <name type="primary">HBB1</name>
</gene>
<accession>P68050</accession>
<accession>P10884</accession>
<organism>
    <name type="scientific">Panthera leo</name>
    <name type="common">Lion</name>
    <dbReference type="NCBI Taxonomy" id="9689"/>
    <lineage>
        <taxon>Eukaryota</taxon>
        <taxon>Metazoa</taxon>
        <taxon>Chordata</taxon>
        <taxon>Craniata</taxon>
        <taxon>Vertebrata</taxon>
        <taxon>Euteleostomi</taxon>
        <taxon>Mammalia</taxon>
        <taxon>Eutheria</taxon>
        <taxon>Laurasiatheria</taxon>
        <taxon>Carnivora</taxon>
        <taxon>Feliformia</taxon>
        <taxon>Felidae</taxon>
        <taxon>Pantherinae</taxon>
        <taxon>Panthera</taxon>
    </lineage>
</organism>
<reference key="1">
    <citation type="journal article" date="1987" name="Z. Naturforsch. C">
        <title>Carnivora: the primary structures of adult lion (Panthera leo) hemoglobins.</title>
        <authorList>
            <person name="Jahan M."/>
            <person name="Ahmed A."/>
            <person name="Braunitzer G."/>
            <person name="Zaidi Z.H."/>
            <person name="Goeltenboth R."/>
        </authorList>
    </citation>
    <scope>PROTEIN SEQUENCE</scope>
    <scope>ACETYLATION AT SER-1</scope>
</reference>
<dbReference type="PIR" id="S03925">
    <property type="entry name" value="HBJL1"/>
</dbReference>
<dbReference type="SMR" id="P68050"/>
<dbReference type="Proteomes" id="UP000694399">
    <property type="component" value="Unplaced"/>
</dbReference>
<dbReference type="GO" id="GO:0072562">
    <property type="term" value="C:blood microparticle"/>
    <property type="evidence" value="ECO:0007669"/>
    <property type="project" value="TreeGrafter"/>
</dbReference>
<dbReference type="GO" id="GO:0031838">
    <property type="term" value="C:haptoglobin-hemoglobin complex"/>
    <property type="evidence" value="ECO:0007669"/>
    <property type="project" value="TreeGrafter"/>
</dbReference>
<dbReference type="GO" id="GO:0005833">
    <property type="term" value="C:hemoglobin complex"/>
    <property type="evidence" value="ECO:0007669"/>
    <property type="project" value="InterPro"/>
</dbReference>
<dbReference type="GO" id="GO:0031720">
    <property type="term" value="F:haptoglobin binding"/>
    <property type="evidence" value="ECO:0007669"/>
    <property type="project" value="TreeGrafter"/>
</dbReference>
<dbReference type="GO" id="GO:0020037">
    <property type="term" value="F:heme binding"/>
    <property type="evidence" value="ECO:0007669"/>
    <property type="project" value="InterPro"/>
</dbReference>
<dbReference type="GO" id="GO:0031721">
    <property type="term" value="F:hemoglobin alpha binding"/>
    <property type="evidence" value="ECO:0007669"/>
    <property type="project" value="TreeGrafter"/>
</dbReference>
<dbReference type="GO" id="GO:0046872">
    <property type="term" value="F:metal ion binding"/>
    <property type="evidence" value="ECO:0007669"/>
    <property type="project" value="UniProtKB-KW"/>
</dbReference>
<dbReference type="GO" id="GO:0043177">
    <property type="term" value="F:organic acid binding"/>
    <property type="evidence" value="ECO:0007669"/>
    <property type="project" value="TreeGrafter"/>
</dbReference>
<dbReference type="GO" id="GO:0019825">
    <property type="term" value="F:oxygen binding"/>
    <property type="evidence" value="ECO:0007669"/>
    <property type="project" value="InterPro"/>
</dbReference>
<dbReference type="GO" id="GO:0005344">
    <property type="term" value="F:oxygen carrier activity"/>
    <property type="evidence" value="ECO:0007669"/>
    <property type="project" value="UniProtKB-KW"/>
</dbReference>
<dbReference type="GO" id="GO:0004601">
    <property type="term" value="F:peroxidase activity"/>
    <property type="evidence" value="ECO:0007669"/>
    <property type="project" value="TreeGrafter"/>
</dbReference>
<dbReference type="GO" id="GO:0042744">
    <property type="term" value="P:hydrogen peroxide catabolic process"/>
    <property type="evidence" value="ECO:0007669"/>
    <property type="project" value="TreeGrafter"/>
</dbReference>
<dbReference type="CDD" id="cd08925">
    <property type="entry name" value="Hb-beta-like"/>
    <property type="match status" value="1"/>
</dbReference>
<dbReference type="FunFam" id="1.10.490.10:FF:000001">
    <property type="entry name" value="Hemoglobin subunit beta"/>
    <property type="match status" value="1"/>
</dbReference>
<dbReference type="Gene3D" id="1.10.490.10">
    <property type="entry name" value="Globins"/>
    <property type="match status" value="1"/>
</dbReference>
<dbReference type="InterPro" id="IPR000971">
    <property type="entry name" value="Globin"/>
</dbReference>
<dbReference type="InterPro" id="IPR009050">
    <property type="entry name" value="Globin-like_sf"/>
</dbReference>
<dbReference type="InterPro" id="IPR012292">
    <property type="entry name" value="Globin/Proto"/>
</dbReference>
<dbReference type="InterPro" id="IPR002337">
    <property type="entry name" value="Hemoglobin_b"/>
</dbReference>
<dbReference type="InterPro" id="IPR050056">
    <property type="entry name" value="Hemoglobin_oxygen_transport"/>
</dbReference>
<dbReference type="PANTHER" id="PTHR11442">
    <property type="entry name" value="HEMOGLOBIN FAMILY MEMBER"/>
    <property type="match status" value="1"/>
</dbReference>
<dbReference type="PANTHER" id="PTHR11442:SF42">
    <property type="entry name" value="HEMOGLOBIN SUBUNIT BETA"/>
    <property type="match status" value="1"/>
</dbReference>
<dbReference type="Pfam" id="PF00042">
    <property type="entry name" value="Globin"/>
    <property type="match status" value="1"/>
</dbReference>
<dbReference type="PRINTS" id="PR00814">
    <property type="entry name" value="BETAHAEM"/>
</dbReference>
<dbReference type="SUPFAM" id="SSF46458">
    <property type="entry name" value="Globin-like"/>
    <property type="match status" value="1"/>
</dbReference>
<dbReference type="PROSITE" id="PS01033">
    <property type="entry name" value="GLOBIN"/>
    <property type="match status" value="1"/>
</dbReference>
<evidence type="ECO:0000250" key="1">
    <source>
        <dbReference type="UniProtKB" id="P02088"/>
    </source>
</evidence>
<evidence type="ECO:0000250" key="2">
    <source>
        <dbReference type="UniProtKB" id="P02089"/>
    </source>
</evidence>
<evidence type="ECO:0000250" key="3">
    <source>
        <dbReference type="UniProtKB" id="P02091"/>
    </source>
</evidence>
<evidence type="ECO:0000255" key="4">
    <source>
        <dbReference type="PROSITE-ProRule" id="PRU00238"/>
    </source>
</evidence>
<evidence type="ECO:0000269" key="5">
    <source ref="1"/>
</evidence>
<comment type="function">
    <text>Involved in oxygen transport from the lung to the various peripheral tissues.</text>
</comment>
<comment type="subunit">
    <text>Heterotetramer of two alpha chains and two beta chains.</text>
</comment>
<comment type="tissue specificity">
    <text>Red blood cells.</text>
</comment>
<comment type="miscellaneous">
    <text>In the cat family (felidae), the oxygen affinity of hemoglobin depends little or not at all on the association with diphosphoglycerate (DPG).</text>
</comment>
<comment type="similarity">
    <text evidence="4">Belongs to the globin family.</text>
</comment>
<protein>
    <recommendedName>
        <fullName>Hemoglobin subunit beta-1</fullName>
    </recommendedName>
    <alternativeName>
        <fullName>Beta-1-globin</fullName>
    </alternativeName>
    <alternativeName>
        <fullName>Hemoglobin beta-1 chain</fullName>
    </alternativeName>
</protein>
<sequence>SFLSAEEKGLVNGLWSKVNVDEVGGEALGRLLVVYPWTQRFFQSFGDLSSADAIMSNAKVKAHGKKVLNSFSDGLKNIDDLKGAFAKLSELHCDKLHVDPENFRLLGNVLVCVLAHHFGHEFNPQVQAAFQKVVAGVASALAHRYH</sequence>
<proteinExistence type="evidence at protein level"/>
<name>HBB1_PANLE</name>
<keyword id="KW-0007">Acetylation</keyword>
<keyword id="KW-0903">Direct protein sequencing</keyword>
<keyword id="KW-0349">Heme</keyword>
<keyword id="KW-0408">Iron</keyword>
<keyword id="KW-0479">Metal-binding</keyword>
<keyword id="KW-0488">Methylation</keyword>
<keyword id="KW-0561">Oxygen transport</keyword>
<keyword id="KW-0597">Phosphoprotein</keyword>
<keyword id="KW-1185">Reference proteome</keyword>
<keyword id="KW-0813">Transport</keyword>